<organism>
    <name type="scientific">Clostridium acetobutylicum (strain ATCC 824 / DSM 792 / JCM 1419 / IAM 19013 / LMG 5710 / NBRC 13948 / NRRL B-527 / VKM B-1787 / 2291 / W)</name>
    <dbReference type="NCBI Taxonomy" id="272562"/>
    <lineage>
        <taxon>Bacteria</taxon>
        <taxon>Bacillati</taxon>
        <taxon>Bacillota</taxon>
        <taxon>Clostridia</taxon>
        <taxon>Eubacteriales</taxon>
        <taxon>Clostridiaceae</taxon>
        <taxon>Clostridium</taxon>
    </lineage>
</organism>
<reference key="1">
    <citation type="journal article" date="2001" name="J. Bacteriol.">
        <title>Genome sequence and comparative analysis of the solvent-producing bacterium Clostridium acetobutylicum.</title>
        <authorList>
            <person name="Noelling J."/>
            <person name="Breton G."/>
            <person name="Omelchenko M.V."/>
            <person name="Makarova K.S."/>
            <person name="Zeng Q."/>
            <person name="Gibson R."/>
            <person name="Lee H.M."/>
            <person name="Dubois J."/>
            <person name="Qiu D."/>
            <person name="Hitti J."/>
            <person name="Wolf Y.I."/>
            <person name="Tatusov R.L."/>
            <person name="Sabathe F."/>
            <person name="Doucette-Stamm L.A."/>
            <person name="Soucaille P."/>
            <person name="Daly M.J."/>
            <person name="Bennett G.N."/>
            <person name="Koonin E.V."/>
            <person name="Smith D.R."/>
        </authorList>
    </citation>
    <scope>NUCLEOTIDE SEQUENCE [LARGE SCALE GENOMIC DNA]</scope>
    <source>
        <strain>ATCC 824 / DSM 792 / JCM 1419 / IAM 19013 / LMG 5710 / NBRC 13948 / NRRL B-527 / VKM B-1787 / 2291 / W</strain>
    </source>
</reference>
<name>SYW_CLOAB</name>
<comment type="function">
    <text evidence="1">Catalyzes the attachment of tryptophan to tRNA(Trp).</text>
</comment>
<comment type="catalytic activity">
    <reaction evidence="1">
        <text>tRNA(Trp) + L-tryptophan + ATP = L-tryptophyl-tRNA(Trp) + AMP + diphosphate + H(+)</text>
        <dbReference type="Rhea" id="RHEA:24080"/>
        <dbReference type="Rhea" id="RHEA-COMP:9671"/>
        <dbReference type="Rhea" id="RHEA-COMP:9705"/>
        <dbReference type="ChEBI" id="CHEBI:15378"/>
        <dbReference type="ChEBI" id="CHEBI:30616"/>
        <dbReference type="ChEBI" id="CHEBI:33019"/>
        <dbReference type="ChEBI" id="CHEBI:57912"/>
        <dbReference type="ChEBI" id="CHEBI:78442"/>
        <dbReference type="ChEBI" id="CHEBI:78535"/>
        <dbReference type="ChEBI" id="CHEBI:456215"/>
        <dbReference type="EC" id="6.1.1.2"/>
    </reaction>
</comment>
<comment type="subunit">
    <text evidence="1">Homodimer.</text>
</comment>
<comment type="subcellular location">
    <subcellularLocation>
        <location evidence="1">Cytoplasm</location>
    </subcellularLocation>
</comment>
<comment type="similarity">
    <text evidence="1">Belongs to the class-I aminoacyl-tRNA synthetase family.</text>
</comment>
<comment type="sequence caution" evidence="2">
    <conflict type="erroneous initiation">
        <sequence resource="EMBL-CDS" id="AAK78603"/>
    </conflict>
</comment>
<keyword id="KW-0030">Aminoacyl-tRNA synthetase</keyword>
<keyword id="KW-0067">ATP-binding</keyword>
<keyword id="KW-0963">Cytoplasm</keyword>
<keyword id="KW-0436">Ligase</keyword>
<keyword id="KW-0547">Nucleotide-binding</keyword>
<keyword id="KW-0648">Protein biosynthesis</keyword>
<keyword id="KW-1185">Reference proteome</keyword>
<proteinExistence type="inferred from homology"/>
<gene>
    <name evidence="1" type="primary">trpS</name>
    <name type="ordered locus">CA_C0626</name>
</gene>
<dbReference type="EC" id="6.1.1.2" evidence="1"/>
<dbReference type="EMBL" id="AE001437">
    <property type="protein sequence ID" value="AAK78603.1"/>
    <property type="status" value="ALT_INIT"/>
    <property type="molecule type" value="Genomic_DNA"/>
</dbReference>
<dbReference type="PIR" id="H96976">
    <property type="entry name" value="H96976"/>
</dbReference>
<dbReference type="RefSeq" id="NP_347263.1">
    <property type="nucleotide sequence ID" value="NC_003030.1"/>
</dbReference>
<dbReference type="RefSeq" id="WP_014518857.1">
    <property type="nucleotide sequence ID" value="NC_003030.1"/>
</dbReference>
<dbReference type="SMR" id="Q97LD6"/>
<dbReference type="STRING" id="272562.CA_C0626"/>
<dbReference type="GeneID" id="44997137"/>
<dbReference type="KEGG" id="cac:CA_C0626"/>
<dbReference type="PATRIC" id="fig|272562.8.peg.828"/>
<dbReference type="eggNOG" id="COG0180">
    <property type="taxonomic scope" value="Bacteria"/>
</dbReference>
<dbReference type="HOGENOM" id="CLU_029244_1_1_9"/>
<dbReference type="OrthoDB" id="9801042at2"/>
<dbReference type="Proteomes" id="UP000000814">
    <property type="component" value="Chromosome"/>
</dbReference>
<dbReference type="GO" id="GO:0005829">
    <property type="term" value="C:cytosol"/>
    <property type="evidence" value="ECO:0007669"/>
    <property type="project" value="TreeGrafter"/>
</dbReference>
<dbReference type="GO" id="GO:0005524">
    <property type="term" value="F:ATP binding"/>
    <property type="evidence" value="ECO:0007669"/>
    <property type="project" value="UniProtKB-UniRule"/>
</dbReference>
<dbReference type="GO" id="GO:0004830">
    <property type="term" value="F:tryptophan-tRNA ligase activity"/>
    <property type="evidence" value="ECO:0007669"/>
    <property type="project" value="UniProtKB-UniRule"/>
</dbReference>
<dbReference type="GO" id="GO:0006436">
    <property type="term" value="P:tryptophanyl-tRNA aminoacylation"/>
    <property type="evidence" value="ECO:0007669"/>
    <property type="project" value="UniProtKB-UniRule"/>
</dbReference>
<dbReference type="CDD" id="cd00806">
    <property type="entry name" value="TrpRS_core"/>
    <property type="match status" value="1"/>
</dbReference>
<dbReference type="FunFam" id="1.10.240.10:FF:000002">
    <property type="entry name" value="Tryptophan--tRNA ligase"/>
    <property type="match status" value="1"/>
</dbReference>
<dbReference type="Gene3D" id="3.40.50.620">
    <property type="entry name" value="HUPs"/>
    <property type="match status" value="1"/>
</dbReference>
<dbReference type="Gene3D" id="1.10.240.10">
    <property type="entry name" value="Tyrosyl-Transfer RNA Synthetase"/>
    <property type="match status" value="1"/>
</dbReference>
<dbReference type="HAMAP" id="MF_00140_B">
    <property type="entry name" value="Trp_tRNA_synth_B"/>
    <property type="match status" value="1"/>
</dbReference>
<dbReference type="InterPro" id="IPR001412">
    <property type="entry name" value="aa-tRNA-synth_I_CS"/>
</dbReference>
<dbReference type="InterPro" id="IPR002305">
    <property type="entry name" value="aa-tRNA-synth_Ic"/>
</dbReference>
<dbReference type="InterPro" id="IPR014729">
    <property type="entry name" value="Rossmann-like_a/b/a_fold"/>
</dbReference>
<dbReference type="InterPro" id="IPR002306">
    <property type="entry name" value="Trp-tRNA-ligase"/>
</dbReference>
<dbReference type="InterPro" id="IPR024109">
    <property type="entry name" value="Trp-tRNA-ligase_bac-type"/>
</dbReference>
<dbReference type="InterPro" id="IPR050203">
    <property type="entry name" value="Trp-tRNA_synthetase"/>
</dbReference>
<dbReference type="NCBIfam" id="TIGR00233">
    <property type="entry name" value="trpS"/>
    <property type="match status" value="1"/>
</dbReference>
<dbReference type="PANTHER" id="PTHR43766">
    <property type="entry name" value="TRYPTOPHAN--TRNA LIGASE, MITOCHONDRIAL"/>
    <property type="match status" value="1"/>
</dbReference>
<dbReference type="PANTHER" id="PTHR43766:SF1">
    <property type="entry name" value="TRYPTOPHAN--TRNA LIGASE, MITOCHONDRIAL"/>
    <property type="match status" value="1"/>
</dbReference>
<dbReference type="Pfam" id="PF00579">
    <property type="entry name" value="tRNA-synt_1b"/>
    <property type="match status" value="1"/>
</dbReference>
<dbReference type="PRINTS" id="PR01039">
    <property type="entry name" value="TRNASYNTHTRP"/>
</dbReference>
<dbReference type="SUPFAM" id="SSF52374">
    <property type="entry name" value="Nucleotidylyl transferase"/>
    <property type="match status" value="1"/>
</dbReference>
<dbReference type="PROSITE" id="PS00178">
    <property type="entry name" value="AA_TRNA_LIGASE_I"/>
    <property type="match status" value="1"/>
</dbReference>
<protein>
    <recommendedName>
        <fullName evidence="1">Tryptophan--tRNA ligase</fullName>
        <ecNumber evidence="1">6.1.1.2</ecNumber>
    </recommendedName>
    <alternativeName>
        <fullName evidence="1">Tryptophanyl-tRNA synthetase</fullName>
        <shortName evidence="1">TrpRS</shortName>
    </alternativeName>
</protein>
<evidence type="ECO:0000255" key="1">
    <source>
        <dbReference type="HAMAP-Rule" id="MF_00140"/>
    </source>
</evidence>
<evidence type="ECO:0000305" key="2"/>
<feature type="chain" id="PRO_0000136621" description="Tryptophan--tRNA ligase">
    <location>
        <begin position="1"/>
        <end position="335"/>
    </location>
</feature>
<feature type="short sequence motif" description="'HIGH' region" evidence="1">
    <location>
        <begin position="14"/>
        <end position="22"/>
    </location>
</feature>
<feature type="short sequence motif" description="'KMSKS' region" evidence="1">
    <location>
        <begin position="198"/>
        <end position="202"/>
    </location>
</feature>
<feature type="binding site" evidence="1">
    <location>
        <begin position="13"/>
        <end position="15"/>
    </location>
    <ligand>
        <name>ATP</name>
        <dbReference type="ChEBI" id="CHEBI:30616"/>
    </ligand>
</feature>
<feature type="binding site" evidence="1">
    <location>
        <begin position="21"/>
        <end position="22"/>
    </location>
    <ligand>
        <name>ATP</name>
        <dbReference type="ChEBI" id="CHEBI:30616"/>
    </ligand>
</feature>
<feature type="binding site" evidence="1">
    <location>
        <position position="138"/>
    </location>
    <ligand>
        <name>L-tryptophan</name>
        <dbReference type="ChEBI" id="CHEBI:57912"/>
    </ligand>
</feature>
<feature type="binding site" evidence="1">
    <location>
        <begin position="150"/>
        <end position="152"/>
    </location>
    <ligand>
        <name>ATP</name>
        <dbReference type="ChEBI" id="CHEBI:30616"/>
    </ligand>
</feature>
<feature type="binding site" evidence="1">
    <location>
        <position position="189"/>
    </location>
    <ligand>
        <name>ATP</name>
        <dbReference type="ChEBI" id="CHEBI:30616"/>
    </ligand>
</feature>
<feature type="binding site" evidence="1">
    <location>
        <begin position="198"/>
        <end position="202"/>
    </location>
    <ligand>
        <name>ATP</name>
        <dbReference type="ChEBI" id="CHEBI:30616"/>
    </ligand>
</feature>
<sequence>MGENKKVIFSGIQPSGELTIGNYFGAIKNWVKLQDEYDCYYCIVDLHAITVKQEAKDLRRRTLQLIATYIASGIDPEKNTIFIQSHVPAHVQAQWILNCMSYVGELSRMTQFKDKSKKYEDTGIGAGLLNYPVLMAADILIYQADLVPVGKDQTQHIELTRDLAQRFNSTYSETFKIPEGYIPTGGAKIMSLQEPLKKMSKSSDNPNSFILIMDPPEVIKRKIARAVTDNVGVVKYTDDQPGVKNLMNIMSCCTGMSVKDIEDKYEGQGYSKFKEDVADALIQELEPIQNKVNELLKDKAYLQDICKKGAQKASYIANKTVSKMMRKVGFILPEK</sequence>
<accession>Q97LD6</accession>